<feature type="chain" id="PRO_0000289726" description="sn-glycerol-3-phosphate import ATP-binding protein UgpC">
    <location>
        <begin position="1"/>
        <end position="345"/>
    </location>
</feature>
<feature type="domain" description="ABC transporter" evidence="1">
    <location>
        <begin position="4"/>
        <end position="235"/>
    </location>
</feature>
<feature type="binding site" evidence="1">
    <location>
        <begin position="37"/>
        <end position="44"/>
    </location>
    <ligand>
        <name>ATP</name>
        <dbReference type="ChEBI" id="CHEBI:30616"/>
    </ligand>
</feature>
<sequence length="345" mass="39291">MATIQLLNIKKQYDNDIFVINDLNLTVADGEFLVIVGPSGCGKSTLLRIIAGLEKVTSGELYIDNELINNREPADRDIAMVFQNYALYPHMTVRGNLEYGLKNRKTPKEDINKRIAHVAKLLEIEPFLDRKPQQLSGGQRQRVAMGRVIVRKPRVFLFDEPLSNLDAKLRAHMCIEIKKLQRSLKTTSLYVTHDQLEAMTLADKMVVMNKGTIEQIGTPMEIYDCPKTIFVADFIGSPPINFLDRQALEKHLGNLFSCSKDTDILAFRPEAILLGEYPDKGPVFHTQIEFIRPIGTGCHVLTRWNDILFTVDIKERLTSDYGQKLNFTVTHQNFHTFNKKTGNRT</sequence>
<comment type="function">
    <text evidence="1">Part of the ABC transporter complex UgpBAEC involved in sn-glycerol-3-phosphate (G3P) import. Responsible for energy coupling to the transport system.</text>
</comment>
<comment type="catalytic activity">
    <reaction evidence="1">
        <text>sn-glycerol 3-phosphate(out) + ATP + H2O = sn-glycerol 3-phosphate(in) + ADP + phosphate + H(+)</text>
        <dbReference type="Rhea" id="RHEA:21668"/>
        <dbReference type="ChEBI" id="CHEBI:15377"/>
        <dbReference type="ChEBI" id="CHEBI:15378"/>
        <dbReference type="ChEBI" id="CHEBI:30616"/>
        <dbReference type="ChEBI" id="CHEBI:43474"/>
        <dbReference type="ChEBI" id="CHEBI:57597"/>
        <dbReference type="ChEBI" id="CHEBI:456216"/>
        <dbReference type="EC" id="7.6.2.10"/>
    </reaction>
</comment>
<comment type="subunit">
    <text evidence="1">The complex is composed of two ATP-binding proteins (UgpC), two transmembrane proteins (UgpA and UgpE) and a solute-binding protein (UgpB).</text>
</comment>
<comment type="subcellular location">
    <subcellularLocation>
        <location evidence="1">Cell inner membrane</location>
        <topology evidence="1">Peripheral membrane protein</topology>
    </subcellularLocation>
</comment>
<comment type="similarity">
    <text evidence="1">Belongs to the ABC transporter superfamily. sn-glycerol-3-phosphate importer (TC 3.A.1.1.3) family.</text>
</comment>
<accession>A1URR2</accession>
<keyword id="KW-0067">ATP-binding</keyword>
<keyword id="KW-0997">Cell inner membrane</keyword>
<keyword id="KW-1003">Cell membrane</keyword>
<keyword id="KW-0472">Membrane</keyword>
<keyword id="KW-0547">Nucleotide-binding</keyword>
<keyword id="KW-0762">Sugar transport</keyword>
<keyword id="KW-1278">Translocase</keyword>
<keyword id="KW-0813">Transport</keyword>
<reference key="1">
    <citation type="submission" date="2006-12" db="EMBL/GenBank/DDBJ databases">
        <authorList>
            <person name="Hendrix L."/>
            <person name="Mohamoud Y."/>
            <person name="Radune D."/>
            <person name="Shvartsbeyn A."/>
            <person name="Daugherty S."/>
            <person name="Dodson R."/>
            <person name="Durkin A.S."/>
            <person name="Harkins D."/>
            <person name="Huot H."/>
            <person name="Kothari S.P."/>
            <person name="Madupu R."/>
            <person name="Li J."/>
            <person name="Nelson W.C."/>
            <person name="Shrivastava S."/>
            <person name="Giglio M.G."/>
            <person name="Haft D."/>
            <person name="Selengut J."/>
            <person name="Fraser-Ligget C."/>
            <person name="Seshadri R."/>
        </authorList>
    </citation>
    <scope>NUCLEOTIDE SEQUENCE [LARGE SCALE GENOMIC DNA]</scope>
    <source>
        <strain>ATCC 35685 / KC583 / Herrer 020/F12,63</strain>
    </source>
</reference>
<name>UGPC_BARBK</name>
<evidence type="ECO:0000255" key="1">
    <source>
        <dbReference type="HAMAP-Rule" id="MF_01727"/>
    </source>
</evidence>
<protein>
    <recommendedName>
        <fullName evidence="1">sn-glycerol-3-phosphate import ATP-binding protein UgpC</fullName>
        <ecNumber evidence="1">7.6.2.10</ecNumber>
    </recommendedName>
</protein>
<gene>
    <name evidence="1" type="primary">ugpC</name>
    <name type="ordered locus">BARBAKC583_0346</name>
</gene>
<organism>
    <name type="scientific">Bartonella bacilliformis (strain ATCC 35685 / KC583 / Herrer 020/F12,63)</name>
    <dbReference type="NCBI Taxonomy" id="360095"/>
    <lineage>
        <taxon>Bacteria</taxon>
        <taxon>Pseudomonadati</taxon>
        <taxon>Pseudomonadota</taxon>
        <taxon>Alphaproteobacteria</taxon>
        <taxon>Hyphomicrobiales</taxon>
        <taxon>Bartonellaceae</taxon>
        <taxon>Bartonella</taxon>
    </lineage>
</organism>
<dbReference type="EC" id="7.6.2.10" evidence="1"/>
<dbReference type="EMBL" id="CP000524">
    <property type="protein sequence ID" value="ABM44479.1"/>
    <property type="molecule type" value="Genomic_DNA"/>
</dbReference>
<dbReference type="RefSeq" id="WP_005766292.1">
    <property type="nucleotide sequence ID" value="NC_008783.1"/>
</dbReference>
<dbReference type="SMR" id="A1URR2"/>
<dbReference type="STRING" id="360095.BARBAKC583_0346"/>
<dbReference type="GeneID" id="4685159"/>
<dbReference type="KEGG" id="bbk:BARBAKC583_0346"/>
<dbReference type="PATRIC" id="fig|360095.6.peg.329"/>
<dbReference type="eggNOG" id="COG3842">
    <property type="taxonomic scope" value="Bacteria"/>
</dbReference>
<dbReference type="HOGENOM" id="CLU_000604_1_1_5"/>
<dbReference type="OrthoDB" id="7817850at2"/>
<dbReference type="Proteomes" id="UP000000643">
    <property type="component" value="Chromosome"/>
</dbReference>
<dbReference type="GO" id="GO:0055052">
    <property type="term" value="C:ATP-binding cassette (ABC) transporter complex, substrate-binding subunit-containing"/>
    <property type="evidence" value="ECO:0007669"/>
    <property type="project" value="TreeGrafter"/>
</dbReference>
<dbReference type="GO" id="GO:0015430">
    <property type="term" value="F:ABC-type glycerol-3-phosphate transporter activity"/>
    <property type="evidence" value="ECO:0007669"/>
    <property type="project" value="UniProtKB-EC"/>
</dbReference>
<dbReference type="GO" id="GO:0005524">
    <property type="term" value="F:ATP binding"/>
    <property type="evidence" value="ECO:0007669"/>
    <property type="project" value="UniProtKB-KW"/>
</dbReference>
<dbReference type="GO" id="GO:0016887">
    <property type="term" value="F:ATP hydrolysis activity"/>
    <property type="evidence" value="ECO:0007669"/>
    <property type="project" value="InterPro"/>
</dbReference>
<dbReference type="GO" id="GO:0008643">
    <property type="term" value="P:carbohydrate transport"/>
    <property type="evidence" value="ECO:0007669"/>
    <property type="project" value="InterPro"/>
</dbReference>
<dbReference type="GO" id="GO:0001407">
    <property type="term" value="P:glycerophosphodiester transmembrane transport"/>
    <property type="evidence" value="ECO:0007669"/>
    <property type="project" value="TreeGrafter"/>
</dbReference>
<dbReference type="CDD" id="cd03301">
    <property type="entry name" value="ABC_MalK_N"/>
    <property type="match status" value="1"/>
</dbReference>
<dbReference type="FunFam" id="3.40.50.300:FF:000042">
    <property type="entry name" value="Maltose/maltodextrin ABC transporter, ATP-binding protein"/>
    <property type="match status" value="1"/>
</dbReference>
<dbReference type="Gene3D" id="2.40.50.100">
    <property type="match status" value="1"/>
</dbReference>
<dbReference type="Gene3D" id="2.40.50.140">
    <property type="entry name" value="Nucleic acid-binding proteins"/>
    <property type="match status" value="1"/>
</dbReference>
<dbReference type="Gene3D" id="3.40.50.300">
    <property type="entry name" value="P-loop containing nucleotide triphosphate hydrolases"/>
    <property type="match status" value="1"/>
</dbReference>
<dbReference type="InterPro" id="IPR003593">
    <property type="entry name" value="AAA+_ATPase"/>
</dbReference>
<dbReference type="InterPro" id="IPR003439">
    <property type="entry name" value="ABC_transporter-like_ATP-bd"/>
</dbReference>
<dbReference type="InterPro" id="IPR017871">
    <property type="entry name" value="ABC_transporter-like_CS"/>
</dbReference>
<dbReference type="InterPro" id="IPR015855">
    <property type="entry name" value="ABC_transpr_MalK-like"/>
</dbReference>
<dbReference type="InterPro" id="IPR047641">
    <property type="entry name" value="ABC_transpr_MalK/UgpC-like"/>
</dbReference>
<dbReference type="InterPro" id="IPR008995">
    <property type="entry name" value="Mo/tungstate-bd_C_term_dom"/>
</dbReference>
<dbReference type="InterPro" id="IPR012340">
    <property type="entry name" value="NA-bd_OB-fold"/>
</dbReference>
<dbReference type="InterPro" id="IPR027417">
    <property type="entry name" value="P-loop_NTPase"/>
</dbReference>
<dbReference type="NCBIfam" id="NF008653">
    <property type="entry name" value="PRK11650.1"/>
    <property type="match status" value="1"/>
</dbReference>
<dbReference type="PANTHER" id="PTHR43875">
    <property type="entry name" value="MALTODEXTRIN IMPORT ATP-BINDING PROTEIN MSMX"/>
    <property type="match status" value="1"/>
</dbReference>
<dbReference type="PANTHER" id="PTHR43875:SF12">
    <property type="entry name" value="SN-GLYCEROL-3-PHOSPHATE IMPORT ATP-BINDING PROTEIN UGPC"/>
    <property type="match status" value="1"/>
</dbReference>
<dbReference type="Pfam" id="PF00005">
    <property type="entry name" value="ABC_tran"/>
    <property type="match status" value="1"/>
</dbReference>
<dbReference type="SMART" id="SM00382">
    <property type="entry name" value="AAA"/>
    <property type="match status" value="1"/>
</dbReference>
<dbReference type="SUPFAM" id="SSF50331">
    <property type="entry name" value="MOP-like"/>
    <property type="match status" value="1"/>
</dbReference>
<dbReference type="SUPFAM" id="SSF52540">
    <property type="entry name" value="P-loop containing nucleoside triphosphate hydrolases"/>
    <property type="match status" value="1"/>
</dbReference>
<dbReference type="PROSITE" id="PS00211">
    <property type="entry name" value="ABC_TRANSPORTER_1"/>
    <property type="match status" value="1"/>
</dbReference>
<dbReference type="PROSITE" id="PS50893">
    <property type="entry name" value="ABC_TRANSPORTER_2"/>
    <property type="match status" value="1"/>
</dbReference>
<dbReference type="PROSITE" id="PS51315">
    <property type="entry name" value="UGPC"/>
    <property type="match status" value="1"/>
</dbReference>
<proteinExistence type="inferred from homology"/>